<sequence length="640" mass="74760">MKNKNSEQNTHSTIGEQDIHYFHEGKHIYAYEFMGAHKACEEGIEGIRFTTWAPNAKSICVIGDFNYWQVEDKNYMEPITDAGLWSVFIPNAKNGDKYKFVVTNKDTNNYVYKSDPYAFFSELRPNTASIITTETQYTWSDDKWLEKRAKTNYYDNPMNVYELHLASWKTKNGKFLTYDELNETLPQYIKEMGYTHVEFMPLHEHPLDASWGYQPTGFYSVNSRHGDIIGLKRLVDKLHNNDIGVILDWVPGHFCKDQHGLIYFDGSPCYEYQEPTKAINKGWGTHNFDLGRNEVKCFLISNAMYWINEFHIDGLRVDAVSNILYLNYDREDGQWIPNIYGGHENLEGIAFLKELNGVLKHTCKGVITIAEESSSWPDISTPVEKGGLGFDFKWNMGWMNDTLRYISLDPVYRKYHHNLITFSMVYHYSEKFILSISHDEVVHGKKSLINKMWGDLWNKYAGLRLYMSYMIGHPGKKLIFMGSEFVQFVEWREYEQLQWQVVDQYESHKQTLHFFKKLNDLYHNETALWQCDYDHHGFRWIDADNSQQSILSFIRSSKDNKQKLIFICNFTPVTYYDYHLGVPDAGSYKEVFNSDNLEFGGSGQVMATEIFSSPQSSHGFEQRITIKIPPMATLVLKLIK</sequence>
<evidence type="ECO:0000255" key="1">
    <source>
        <dbReference type="HAMAP-Rule" id="MF_00685"/>
    </source>
</evidence>
<gene>
    <name evidence="1" type="primary">glgB</name>
    <name type="ordered locus">FTM_0569</name>
</gene>
<reference key="1">
    <citation type="journal article" date="2009" name="PLoS Pathog.">
        <title>Molecular evolutionary consequences of niche restriction in Francisella tularensis, a facultative intracellular pathogen.</title>
        <authorList>
            <person name="Larsson P."/>
            <person name="Elfsmark D."/>
            <person name="Svensson K."/>
            <person name="Wikstroem P."/>
            <person name="Forsman M."/>
            <person name="Brettin T."/>
            <person name="Keim P."/>
            <person name="Johansson A."/>
        </authorList>
    </citation>
    <scope>NUCLEOTIDE SEQUENCE [LARGE SCALE GENOMIC DNA]</scope>
    <source>
        <strain>FSC147</strain>
    </source>
</reference>
<accession>B2SFM7</accession>
<comment type="function">
    <text evidence="1">Catalyzes the formation of the alpha-1,6-glucosidic linkages in glycogen by scission of a 1,4-alpha-linked oligosaccharide from growing alpha-1,4-glucan chains and the subsequent attachment of the oligosaccharide to the alpha-1,6 position.</text>
</comment>
<comment type="catalytic activity">
    <reaction evidence="1">
        <text>Transfers a segment of a (1-&gt;4)-alpha-D-glucan chain to a primary hydroxy group in a similar glucan chain.</text>
        <dbReference type="EC" id="2.4.1.18"/>
    </reaction>
</comment>
<comment type="pathway">
    <text evidence="1">Glycan biosynthesis; glycogen biosynthesis.</text>
</comment>
<comment type="subunit">
    <text evidence="1">Monomer.</text>
</comment>
<comment type="similarity">
    <text evidence="1">Belongs to the glycosyl hydrolase 13 family. GlgB subfamily.</text>
</comment>
<keyword id="KW-0119">Carbohydrate metabolism</keyword>
<keyword id="KW-0320">Glycogen biosynthesis</keyword>
<keyword id="KW-0321">Glycogen metabolism</keyword>
<keyword id="KW-0328">Glycosyltransferase</keyword>
<keyword id="KW-0808">Transferase</keyword>
<name>GLGB_FRATM</name>
<protein>
    <recommendedName>
        <fullName evidence="1">1,4-alpha-glucan branching enzyme GlgB</fullName>
        <ecNumber evidence="1">2.4.1.18</ecNumber>
    </recommendedName>
    <alternativeName>
        <fullName evidence="1">1,4-alpha-D-glucan:1,4-alpha-D-glucan 6-glucosyl-transferase</fullName>
    </alternativeName>
    <alternativeName>
        <fullName evidence="1">Alpha-(1-&gt;4)-glucan branching enzyme</fullName>
    </alternativeName>
    <alternativeName>
        <fullName evidence="1">Glycogen branching enzyme</fullName>
        <shortName evidence="1">BE</shortName>
    </alternativeName>
</protein>
<dbReference type="EC" id="2.4.1.18" evidence="1"/>
<dbReference type="EMBL" id="CP000915">
    <property type="protein sequence ID" value="ACD30570.1"/>
    <property type="molecule type" value="Genomic_DNA"/>
</dbReference>
<dbReference type="SMR" id="B2SFM7"/>
<dbReference type="CAZy" id="CBM48">
    <property type="family name" value="Carbohydrate-Binding Module Family 48"/>
</dbReference>
<dbReference type="CAZy" id="GH13">
    <property type="family name" value="Glycoside Hydrolase Family 13"/>
</dbReference>
<dbReference type="KEGG" id="ftm:FTM_0569"/>
<dbReference type="HOGENOM" id="CLU_004245_3_2_6"/>
<dbReference type="UniPathway" id="UPA00164"/>
<dbReference type="GO" id="GO:0005829">
    <property type="term" value="C:cytosol"/>
    <property type="evidence" value="ECO:0007669"/>
    <property type="project" value="TreeGrafter"/>
</dbReference>
<dbReference type="GO" id="GO:0003844">
    <property type="term" value="F:1,4-alpha-glucan branching enzyme activity"/>
    <property type="evidence" value="ECO:0007669"/>
    <property type="project" value="UniProtKB-UniRule"/>
</dbReference>
<dbReference type="GO" id="GO:0043169">
    <property type="term" value="F:cation binding"/>
    <property type="evidence" value="ECO:0007669"/>
    <property type="project" value="InterPro"/>
</dbReference>
<dbReference type="GO" id="GO:0004553">
    <property type="term" value="F:hydrolase activity, hydrolyzing O-glycosyl compounds"/>
    <property type="evidence" value="ECO:0007669"/>
    <property type="project" value="InterPro"/>
</dbReference>
<dbReference type="GO" id="GO:0005978">
    <property type="term" value="P:glycogen biosynthetic process"/>
    <property type="evidence" value="ECO:0007669"/>
    <property type="project" value="UniProtKB-UniRule"/>
</dbReference>
<dbReference type="CDD" id="cd11322">
    <property type="entry name" value="AmyAc_Glg_BE"/>
    <property type="match status" value="1"/>
</dbReference>
<dbReference type="CDD" id="cd02855">
    <property type="entry name" value="E_set_GBE_prok_N"/>
    <property type="match status" value="1"/>
</dbReference>
<dbReference type="FunFam" id="2.60.40.1180:FF:000002">
    <property type="entry name" value="1,4-alpha-glucan branching enzyme GlgB"/>
    <property type="match status" value="1"/>
</dbReference>
<dbReference type="FunFam" id="3.20.20.80:FF:000003">
    <property type="entry name" value="1,4-alpha-glucan branching enzyme GlgB"/>
    <property type="match status" value="1"/>
</dbReference>
<dbReference type="Gene3D" id="3.20.20.80">
    <property type="entry name" value="Glycosidases"/>
    <property type="match status" value="1"/>
</dbReference>
<dbReference type="Gene3D" id="2.60.40.1180">
    <property type="entry name" value="Golgi alpha-mannosidase II"/>
    <property type="match status" value="1"/>
</dbReference>
<dbReference type="Gene3D" id="2.60.40.10">
    <property type="entry name" value="Immunoglobulins"/>
    <property type="match status" value="1"/>
</dbReference>
<dbReference type="HAMAP" id="MF_00685">
    <property type="entry name" value="GlgB"/>
    <property type="match status" value="1"/>
</dbReference>
<dbReference type="InterPro" id="IPR006048">
    <property type="entry name" value="A-amylase/branching_C"/>
</dbReference>
<dbReference type="InterPro" id="IPR037439">
    <property type="entry name" value="Branching_enzy"/>
</dbReference>
<dbReference type="InterPro" id="IPR006407">
    <property type="entry name" value="GlgB"/>
</dbReference>
<dbReference type="InterPro" id="IPR044143">
    <property type="entry name" value="GlgB_N_E_set_prok"/>
</dbReference>
<dbReference type="InterPro" id="IPR006047">
    <property type="entry name" value="Glyco_hydro_13_cat_dom"/>
</dbReference>
<dbReference type="InterPro" id="IPR004193">
    <property type="entry name" value="Glyco_hydro_13_N"/>
</dbReference>
<dbReference type="InterPro" id="IPR013780">
    <property type="entry name" value="Glyco_hydro_b"/>
</dbReference>
<dbReference type="InterPro" id="IPR017853">
    <property type="entry name" value="Glycoside_hydrolase_SF"/>
</dbReference>
<dbReference type="InterPro" id="IPR013783">
    <property type="entry name" value="Ig-like_fold"/>
</dbReference>
<dbReference type="InterPro" id="IPR014756">
    <property type="entry name" value="Ig_E-set"/>
</dbReference>
<dbReference type="NCBIfam" id="TIGR01515">
    <property type="entry name" value="branching_enzym"/>
    <property type="match status" value="1"/>
</dbReference>
<dbReference type="NCBIfam" id="NF003811">
    <property type="entry name" value="PRK05402.1"/>
    <property type="match status" value="1"/>
</dbReference>
<dbReference type="NCBIfam" id="NF008967">
    <property type="entry name" value="PRK12313.1"/>
    <property type="match status" value="1"/>
</dbReference>
<dbReference type="PANTHER" id="PTHR43651">
    <property type="entry name" value="1,4-ALPHA-GLUCAN-BRANCHING ENZYME"/>
    <property type="match status" value="1"/>
</dbReference>
<dbReference type="PANTHER" id="PTHR43651:SF3">
    <property type="entry name" value="1,4-ALPHA-GLUCAN-BRANCHING ENZYME"/>
    <property type="match status" value="1"/>
</dbReference>
<dbReference type="Pfam" id="PF00128">
    <property type="entry name" value="Alpha-amylase"/>
    <property type="match status" value="2"/>
</dbReference>
<dbReference type="Pfam" id="PF02806">
    <property type="entry name" value="Alpha-amylase_C"/>
    <property type="match status" value="1"/>
</dbReference>
<dbReference type="Pfam" id="PF02922">
    <property type="entry name" value="CBM_48"/>
    <property type="match status" value="1"/>
</dbReference>
<dbReference type="PIRSF" id="PIRSF000463">
    <property type="entry name" value="GlgB"/>
    <property type="match status" value="1"/>
</dbReference>
<dbReference type="SMART" id="SM00642">
    <property type="entry name" value="Aamy"/>
    <property type="match status" value="1"/>
</dbReference>
<dbReference type="SUPFAM" id="SSF51445">
    <property type="entry name" value="(Trans)glycosidases"/>
    <property type="match status" value="1"/>
</dbReference>
<dbReference type="SUPFAM" id="SSF81296">
    <property type="entry name" value="E set domains"/>
    <property type="match status" value="1"/>
</dbReference>
<dbReference type="SUPFAM" id="SSF51011">
    <property type="entry name" value="Glycosyl hydrolase domain"/>
    <property type="match status" value="1"/>
</dbReference>
<proteinExistence type="inferred from homology"/>
<feature type="chain" id="PRO_1000131815" description="1,4-alpha-glucan branching enzyme GlgB">
    <location>
        <begin position="1"/>
        <end position="640"/>
    </location>
</feature>
<feature type="active site" description="Nucleophile" evidence="1">
    <location>
        <position position="318"/>
    </location>
</feature>
<feature type="active site" description="Proton donor" evidence="1">
    <location>
        <position position="371"/>
    </location>
</feature>
<organism>
    <name type="scientific">Francisella tularensis subsp. mediasiatica (strain FSC147)</name>
    <dbReference type="NCBI Taxonomy" id="441952"/>
    <lineage>
        <taxon>Bacteria</taxon>
        <taxon>Pseudomonadati</taxon>
        <taxon>Pseudomonadota</taxon>
        <taxon>Gammaproteobacteria</taxon>
        <taxon>Thiotrichales</taxon>
        <taxon>Francisellaceae</taxon>
        <taxon>Francisella</taxon>
    </lineage>
</organism>